<accession>P04510</accession>
<keyword id="KW-0024">Alternative initiation</keyword>
<keyword id="KW-0106">Calcium</keyword>
<keyword id="KW-0167">Capsid protein</keyword>
<keyword id="KW-1015">Disulfide bond</keyword>
<keyword id="KW-0325">Glycoprotein</keyword>
<keyword id="KW-1038">Host endoplasmic reticulum</keyword>
<keyword id="KW-0945">Host-virus interaction</keyword>
<keyword id="KW-0479">Metal-binding</keyword>
<keyword id="KW-1152">Outer capsid protein</keyword>
<keyword id="KW-0732">Signal</keyword>
<keyword id="KW-1146">T=13 icosahedral capsid protein</keyword>
<keyword id="KW-0946">Virion</keyword>
<evidence type="ECO:0000255" key="1"/>
<evidence type="ECO:0000255" key="2">
    <source>
        <dbReference type="HAMAP-Rule" id="MF_04131"/>
    </source>
</evidence>
<evidence type="ECO:0000305" key="3"/>
<dbReference type="EMBL" id="M11164">
    <property type="protein sequence ID" value="AAA47312.1"/>
    <property type="molecule type" value="Genomic_RNA"/>
</dbReference>
<dbReference type="PIR" id="A04133">
    <property type="entry name" value="VGXR3S"/>
</dbReference>
<dbReference type="PIR" id="H27620">
    <property type="entry name" value="VGXR2S"/>
</dbReference>
<dbReference type="SMR" id="P04510"/>
<dbReference type="GO" id="GO:0044166">
    <property type="term" value="C:host cell endoplasmic reticulum lumen"/>
    <property type="evidence" value="ECO:0007669"/>
    <property type="project" value="UniProtKB-SubCell"/>
</dbReference>
<dbReference type="GO" id="GO:0039621">
    <property type="term" value="C:T=13 icosahedral viral capsid"/>
    <property type="evidence" value="ECO:0007669"/>
    <property type="project" value="UniProtKB-UniRule"/>
</dbReference>
<dbReference type="GO" id="GO:0039624">
    <property type="term" value="C:viral outer capsid"/>
    <property type="evidence" value="ECO:0007669"/>
    <property type="project" value="UniProtKB-UniRule"/>
</dbReference>
<dbReference type="GO" id="GO:0046872">
    <property type="term" value="F:metal ion binding"/>
    <property type="evidence" value="ECO:0007669"/>
    <property type="project" value="UniProtKB-KW"/>
</dbReference>
<dbReference type="Gene3D" id="3.40.50.11130">
    <property type="entry name" value="Glycoprotein VP7, domain 1"/>
    <property type="match status" value="1"/>
</dbReference>
<dbReference type="Gene3D" id="2.60.120.800">
    <property type="entry name" value="Rotavirus outer-layer protein VP7, domain 2"/>
    <property type="match status" value="1"/>
</dbReference>
<dbReference type="HAMAP" id="MF_04130">
    <property type="entry name" value="Rota_VP7"/>
    <property type="match status" value="1"/>
</dbReference>
<dbReference type="HAMAP" id="MF_04131">
    <property type="entry name" value="Rota_VP7_A"/>
    <property type="match status" value="1"/>
</dbReference>
<dbReference type="InterPro" id="IPR001963">
    <property type="entry name" value="VP7"/>
</dbReference>
<dbReference type="InterPro" id="IPR042207">
    <property type="entry name" value="VP7_1"/>
</dbReference>
<dbReference type="InterPro" id="IPR042210">
    <property type="entry name" value="VP7_2"/>
</dbReference>
<dbReference type="Pfam" id="PF00434">
    <property type="entry name" value="VP7"/>
    <property type="match status" value="1"/>
</dbReference>
<reference key="1">
    <citation type="journal article" date="1987" name="Virology">
        <title>Comparison of the amino acid sequences of the major neutralization protein of four human rotavirus serotypes.</title>
        <authorList>
            <person name="Green K.Y."/>
            <person name="Midthun K."/>
            <person name="Gorziglia M."/>
            <person name="Hoshino Y."/>
            <person name="Kapikian A.Z."/>
            <person name="Chanock R.M."/>
            <person name="Flores J."/>
        </authorList>
    </citation>
    <scope>NUCLEOTIDE SEQUENCE [GENOMIC RNA]</scope>
</reference>
<reference key="2">
    <citation type="submission" date="1985-03" db="EMBL/GenBank/DDBJ databases">
        <authorList>
            <person name="Both G.W."/>
        </authorList>
    </citation>
    <scope>NUCLEOTIDE SEQUENCE [GENOMIC RNA]</scope>
</reference>
<proteinExistence type="inferred from homology"/>
<comment type="function">
    <text evidence="2">Calcium-binding protein that interacts with rotavirus cell receptors once the initial attachment by VP4 has been achieved. Rotavirus attachment and entry into the host cell probably involves multiple sequential contacts between the outer capsid proteins VP4 and VP7, and the cell receptors. Following entry into the host cell, low intracellular or intravesicular Ca(2+) concentration probably causes the calcium-stabilized VP7 trimers to dissociate from the virion. This step is probably necessary for the membrane-disrupting entry step and the release of VP4, which is locked onto the virion by VP7.</text>
</comment>
<comment type="subunit">
    <text evidence="2">Homotrimer; disulfide-linked. 2 Ca(2+) ions bound at each subunit interface in the trimer hold the trimer together. Interacts with the intermediate capsid protein VP6. Interacts with the outer capsid protein VP5*.</text>
</comment>
<comment type="subcellular location">
    <subcellularLocation>
        <location evidence="2">Virion</location>
    </subcellularLocation>
    <subcellularLocation>
        <location evidence="2">Host endoplasmic reticulum lumen</location>
    </subcellularLocation>
    <text evidence="2">The outer layer contains 780 copies of VP7, grouped as 260 trimers. Immature double-layered particles assembled in the cytoplasm bud across the membrane of the endoplasmic reticulum, acquiring during this process a transient lipid membrane that is modified with the ER resident viral glycoproteins NSP4 and VP7; these enveloped particles also contain VP4. As the particles move towards the interior of the ER cisternae, the transient lipid membrane and the non-structural protein NSP4 are lost, while the virus surface proteins VP4 and VP7 rearrange to form the outermost virus protein layer, yielding mature infectious triple-layered particles.</text>
</comment>
<comment type="alternative products">
    <event type="alternative initiation"/>
    <isoform>
        <id>P04510-1</id>
        <name>1</name>
        <sequence type="displayed"/>
    </isoform>
    <isoform>
        <id>P04510-2</id>
        <name>2</name>
        <sequence type="described" ref="VSP_038624"/>
    </isoform>
</comment>
<comment type="PTM">
    <text evidence="2">N-glycosylated.</text>
</comment>
<comment type="PTM">
    <text evidence="2">The N-terminus is blocked possibly by pyroglutamic acid.</text>
</comment>
<comment type="miscellaneous">
    <text evidence="2">Some rotavirus strains are neuraminidase-sensitive and require sialic acid to attach to the cell surface. Some rotavirus strains are integrin-dependent. Some rotavirus strains depend on ganglioside for their entry into the host cell. Hsp70 also seems to be involved in the entry of some strains.</text>
</comment>
<comment type="miscellaneous">
    <text evidence="2">In group A rotaviruses, VP7 defines the G serotype.</text>
</comment>
<comment type="miscellaneous">
    <molecule>Isoform 2</molecule>
    <text evidence="3">Produced by alternative initiation at Met-30 of isoform 1.</text>
</comment>
<comment type="similarity">
    <text evidence="2">Belongs to the rotavirus VP7 family.</text>
</comment>
<organismHost>
    <name type="scientific">Homo sapiens</name>
    <name type="common">Human</name>
    <dbReference type="NCBI Taxonomy" id="9606"/>
</organismHost>
<organism>
    <name type="scientific">Rotavirus A (strain RVA/Human/Japan/S2/1980/G2P1B[4])</name>
    <name type="common">RV-A</name>
    <dbReference type="NCBI Taxonomy" id="10959"/>
    <lineage>
        <taxon>Viruses</taxon>
        <taxon>Riboviria</taxon>
        <taxon>Orthornavirae</taxon>
        <taxon>Duplornaviricota</taxon>
        <taxon>Resentoviricetes</taxon>
        <taxon>Reovirales</taxon>
        <taxon>Sedoreoviridae</taxon>
        <taxon>Rotavirus</taxon>
        <taxon>Rotavirus A</taxon>
    </lineage>
</organism>
<protein>
    <recommendedName>
        <fullName evidence="2">Outer capsid glycoprotein VP7</fullName>
    </recommendedName>
</protein>
<feature type="signal peptide" evidence="2">
    <location>
        <begin position="1"/>
        <end position="50"/>
    </location>
</feature>
<feature type="chain" id="PRO_0000149605" description="Outer capsid glycoprotein VP7" evidence="2">
    <location>
        <begin position="51"/>
        <end position="326"/>
    </location>
</feature>
<feature type="region of interest" description="CNP motif; interaction with ITGAV/ITGB3" evidence="2">
    <location>
        <begin position="165"/>
        <end position="167"/>
    </location>
</feature>
<feature type="region of interest" description="GPR motif; interaction with ITGAX/ITGB2" evidence="2">
    <location>
        <begin position="253"/>
        <end position="255"/>
    </location>
</feature>
<feature type="binding site" evidence="2">
    <location>
        <position position="95"/>
    </location>
    <ligand>
        <name>Ca(2+)</name>
        <dbReference type="ChEBI" id="CHEBI:29108"/>
        <label>1</label>
    </ligand>
</feature>
<feature type="binding site" evidence="2">
    <location>
        <position position="177"/>
    </location>
    <ligand>
        <name>Ca(2+)</name>
        <dbReference type="ChEBI" id="CHEBI:29108"/>
        <label>2</label>
    </ligand>
</feature>
<feature type="binding site" evidence="2">
    <location>
        <position position="206"/>
    </location>
    <ligand>
        <name>Ca(2+)</name>
        <dbReference type="ChEBI" id="CHEBI:29108"/>
        <label>1</label>
    </ligand>
</feature>
<feature type="binding site" evidence="2">
    <location>
        <position position="214"/>
    </location>
    <ligand>
        <name>Ca(2+)</name>
        <dbReference type="ChEBI" id="CHEBI:29108"/>
        <label>1</label>
    </ligand>
</feature>
<feature type="binding site" evidence="2">
    <location>
        <position position="216"/>
    </location>
    <ligand>
        <name>Ca(2+)</name>
        <dbReference type="ChEBI" id="CHEBI:29108"/>
        <label>1</label>
    </ligand>
</feature>
<feature type="binding site" evidence="2">
    <location>
        <position position="228"/>
    </location>
    <ligand>
        <name>Ca(2+)</name>
        <dbReference type="ChEBI" id="CHEBI:29108"/>
        <label>2</label>
    </ligand>
</feature>
<feature type="binding site" evidence="2">
    <location>
        <position position="229"/>
    </location>
    <ligand>
        <name>Ca(2+)</name>
        <dbReference type="ChEBI" id="CHEBI:29108"/>
        <label>2</label>
    </ligand>
</feature>
<feature type="binding site" evidence="2">
    <location>
        <position position="301"/>
    </location>
    <ligand>
        <name>Ca(2+)</name>
        <dbReference type="ChEBI" id="CHEBI:29108"/>
        <label>2</label>
    </ligand>
</feature>
<feature type="glycosylation site" description="N-linked (GlcNAc...) asparagine; by host" evidence="1">
    <location>
        <position position="69"/>
    </location>
</feature>
<feature type="glycosylation site" description="N-linked (GlcNAc...) asparagine; by host" evidence="1">
    <location>
        <position position="146"/>
    </location>
</feature>
<feature type="glycosylation site" description="N-linked (GlcNAc...) asparagine; by host" evidence="1">
    <location>
        <position position="238"/>
    </location>
</feature>
<feature type="disulfide bond" evidence="2">
    <location>
        <begin position="82"/>
        <end position="135"/>
    </location>
</feature>
<feature type="disulfide bond" evidence="2">
    <location>
        <begin position="165"/>
        <end position="249"/>
    </location>
</feature>
<feature type="disulfide bond" evidence="2">
    <location>
        <begin position="191"/>
        <end position="244"/>
    </location>
</feature>
<feature type="disulfide bond" evidence="2">
    <location>
        <begin position="196"/>
        <end position="207"/>
    </location>
</feature>
<feature type="splice variant" id="VSP_038624" description="In isoform 2." evidence="3">
    <location>
        <begin position="1"/>
        <end position="29"/>
    </location>
</feature>
<feature type="sequence conflict" description="In Ref. 2; AAA47312." evidence="3" ref="2">
    <original>I</original>
    <variation>T</variation>
    <location>
        <position position="209"/>
    </location>
</feature>
<name>VP7_ROTHS</name>
<sequence length="326" mass="37285">MYGIEYTTILTILISIILLNYILKTITNTMDYIIFRFLLLIALISPFVRTQNYGMYLPITGSLDAVYTNSTSGESFLTSTLCLYYPAEAKNEISDDEWENTLSQLFLTKGWPTGSVYFKDYNDITTFSMNPQLYCDYNVVLMRYDNTSELDVSELADLILNEWLCNPMDISLYYYQQNSESNKWISMGTDCTVKVCPLNTQTLGIGCKITDVDTFEIVASSEKLVITDVVNGVNHKINISISTCTIRNCNKLGPRENVAIIQVGGPNALDITADPTTVPQVQRIMRVNWKKWWQVFYTVVDYINQIIQVMSKRSRSLDTAAFYYRI</sequence>